<dbReference type="EMBL" id="L34630">
    <property type="protein sequence ID" value="AAA68932.1"/>
    <property type="molecule type" value="Genomic_DNA"/>
</dbReference>
<dbReference type="EMBL" id="BA000022">
    <property type="protein sequence ID" value="BAA17917.1"/>
    <property type="molecule type" value="Genomic_DNA"/>
</dbReference>
<dbReference type="SMR" id="Q55282"/>
<dbReference type="FunCoup" id="Q55282">
    <property type="interactions" value="58"/>
</dbReference>
<dbReference type="IntAct" id="Q55282">
    <property type="interactions" value="1"/>
</dbReference>
<dbReference type="STRING" id="1148.gene:10498786"/>
<dbReference type="TCDB" id="3.A.1.15.1">
    <property type="family name" value="the atp-binding cassette (abc) superfamily"/>
</dbReference>
<dbReference type="PaxDb" id="1148-1653000"/>
<dbReference type="EnsemblBacteria" id="BAA17917">
    <property type="protein sequence ID" value="BAA17917"/>
    <property type="gene ID" value="BAA17917"/>
</dbReference>
<dbReference type="KEGG" id="syn:sll1600"/>
<dbReference type="eggNOG" id="COG1108">
    <property type="taxonomic scope" value="Bacteria"/>
</dbReference>
<dbReference type="InParanoid" id="Q55282"/>
<dbReference type="PhylomeDB" id="Q55282"/>
<dbReference type="Proteomes" id="UP000001425">
    <property type="component" value="Chromosome"/>
</dbReference>
<dbReference type="GO" id="GO:0043190">
    <property type="term" value="C:ATP-binding cassette (ABC) transporter complex"/>
    <property type="evidence" value="ECO:0007669"/>
    <property type="project" value="InterPro"/>
</dbReference>
<dbReference type="GO" id="GO:0005886">
    <property type="term" value="C:plasma membrane"/>
    <property type="evidence" value="ECO:0000318"/>
    <property type="project" value="GO_Central"/>
</dbReference>
<dbReference type="GO" id="GO:0010043">
    <property type="term" value="P:response to zinc ion"/>
    <property type="evidence" value="ECO:0000318"/>
    <property type="project" value="GO_Central"/>
</dbReference>
<dbReference type="GO" id="GO:0055085">
    <property type="term" value="P:transmembrane transport"/>
    <property type="evidence" value="ECO:0007669"/>
    <property type="project" value="InterPro"/>
</dbReference>
<dbReference type="CDD" id="cd06550">
    <property type="entry name" value="TM_ABC_iron-siderophores_like"/>
    <property type="match status" value="1"/>
</dbReference>
<dbReference type="FunFam" id="1.10.3470.10:FF:000003">
    <property type="entry name" value="Iron ABC transporter permease SitD"/>
    <property type="match status" value="1"/>
</dbReference>
<dbReference type="Gene3D" id="1.10.3470.10">
    <property type="entry name" value="ABC transporter involved in vitamin B12 uptake, BtuC"/>
    <property type="match status" value="1"/>
</dbReference>
<dbReference type="InterPro" id="IPR037294">
    <property type="entry name" value="ABC_BtuC-like"/>
</dbReference>
<dbReference type="InterPro" id="IPR001626">
    <property type="entry name" value="ABC_TroCD"/>
</dbReference>
<dbReference type="PANTHER" id="PTHR30477">
    <property type="entry name" value="ABC-TRANSPORTER METAL-BINDING PROTEIN"/>
    <property type="match status" value="1"/>
</dbReference>
<dbReference type="PANTHER" id="PTHR30477:SF13">
    <property type="entry name" value="IRON TRANSPORT SYSTEM MEMBRANE PROTEIN HI_0360-RELATED"/>
    <property type="match status" value="1"/>
</dbReference>
<dbReference type="Pfam" id="PF00950">
    <property type="entry name" value="ABC-3"/>
    <property type="match status" value="1"/>
</dbReference>
<dbReference type="SUPFAM" id="SSF81345">
    <property type="entry name" value="ABC transporter involved in vitamin B12 uptake, BtuC"/>
    <property type="match status" value="1"/>
</dbReference>
<proteinExistence type="evidence at protein level"/>
<protein>
    <recommendedName>
        <fullName>Manganese transport system membrane protein MntB</fullName>
    </recommendedName>
</protein>
<organism>
    <name type="scientific">Synechocystis sp. (strain ATCC 27184 / PCC 6803 / Kazusa)</name>
    <dbReference type="NCBI Taxonomy" id="1111708"/>
    <lineage>
        <taxon>Bacteria</taxon>
        <taxon>Bacillati</taxon>
        <taxon>Cyanobacteriota</taxon>
        <taxon>Cyanophyceae</taxon>
        <taxon>Synechococcales</taxon>
        <taxon>Merismopediaceae</taxon>
        <taxon>Synechocystis</taxon>
    </lineage>
</organism>
<evidence type="ECO:0000305" key="1"/>
<evidence type="ECO:0000305" key="2">
    <source>
    </source>
</evidence>
<gene>
    <name type="primary">mntB</name>
    <name type="ordered locus">sll1600</name>
</gene>
<keyword id="KW-1003">Cell membrane</keyword>
<keyword id="KW-0464">Manganese</keyword>
<keyword id="KW-0472">Membrane</keyword>
<keyword id="KW-1185">Reference proteome</keyword>
<keyword id="KW-0812">Transmembrane</keyword>
<keyword id="KW-1133">Transmembrane helix</keyword>
<keyword id="KW-0813">Transport</keyword>
<name>MNTB_SYNY3</name>
<comment type="function">
    <text>Part of an ATP-driven transport system for manganese.</text>
</comment>
<comment type="subcellular location">
    <subcellularLocation>
        <location>Cell membrane</location>
        <topology>Multi-pass membrane protein</topology>
    </subcellularLocation>
</comment>
<comment type="similarity">
    <text evidence="1">Belongs to the ABC-3 integral membrane protein family.</text>
</comment>
<reference key="1">
    <citation type="journal article" date="1995" name="EMBO J.">
        <title>Molecular identification of an ABC transporter complex for manganese: analysis of a cyanobacterial mutant strain impaired in the photosynthetic oxygen evolution process.</title>
        <authorList>
            <person name="Bartsevich V.V."/>
            <person name="Pakrasi H.B."/>
        </authorList>
    </citation>
    <scope>NUCLEOTIDE SEQUENCE [GENOMIC DNA]</scope>
</reference>
<reference key="2">
    <citation type="journal article" date="1996" name="DNA Res.">
        <title>Sequence analysis of the genome of the unicellular cyanobacterium Synechocystis sp. strain PCC6803. II. Sequence determination of the entire genome and assignment of potential protein-coding regions.</title>
        <authorList>
            <person name="Kaneko T."/>
            <person name="Sato S."/>
            <person name="Kotani H."/>
            <person name="Tanaka A."/>
            <person name="Asamizu E."/>
            <person name="Nakamura Y."/>
            <person name="Miyajima N."/>
            <person name="Hirosawa M."/>
            <person name="Sugiura M."/>
            <person name="Sasamoto S."/>
            <person name="Kimura T."/>
            <person name="Hosouchi T."/>
            <person name="Matsuno A."/>
            <person name="Muraki A."/>
            <person name="Nakazaki N."/>
            <person name="Naruo K."/>
            <person name="Okumura S."/>
            <person name="Shimpo S."/>
            <person name="Takeuchi C."/>
            <person name="Wada T."/>
            <person name="Watanabe A."/>
            <person name="Yamada M."/>
            <person name="Yasuda M."/>
            <person name="Tabata S."/>
        </authorList>
    </citation>
    <scope>NUCLEOTIDE SEQUENCE [LARGE SCALE GENOMIC DNA]</scope>
    <source>
        <strain>ATCC 27184 / PCC 6803 / Kazusa</strain>
    </source>
</reference>
<reference key="3">
    <citation type="journal article" date="1999" name="J. Bacteriol.">
        <title>Membrane topology of MntB, the transmembrane protein component of an ABC transporter system for manganese in the cyanobacterium Synechocystis sp. strain PCC 6803.</title>
        <authorList>
            <person name="Bartsevich V.V."/>
            <person name="Pakrasi H.B."/>
        </authorList>
    </citation>
    <scope>TOPOLOGY</scope>
</reference>
<feature type="chain" id="PRO_0000171148" description="Manganese transport system membrane protein MntB">
    <location>
        <begin position="1"/>
        <end position="306"/>
    </location>
</feature>
<feature type="topological domain" description="Periplasmic" evidence="2">
    <location>
        <begin position="1"/>
        <end position="25"/>
    </location>
</feature>
<feature type="transmembrane region" description="Helical" evidence="1">
    <location>
        <begin position="26"/>
        <end position="46"/>
    </location>
</feature>
<feature type="topological domain" description="Cytoplasmic" evidence="2">
    <location>
        <begin position="47"/>
        <end position="48"/>
    </location>
</feature>
<feature type="transmembrane region" description="Helical" evidence="1">
    <location>
        <begin position="49"/>
        <end position="69"/>
    </location>
</feature>
<feature type="topological domain" description="Periplasmic" evidence="2">
    <location>
        <begin position="70"/>
        <end position="71"/>
    </location>
</feature>
<feature type="transmembrane region" description="Helical" evidence="1">
    <location>
        <begin position="72"/>
        <end position="92"/>
    </location>
</feature>
<feature type="topological domain" description="Cytoplasmic" evidence="2">
    <location>
        <begin position="93"/>
        <end position="101"/>
    </location>
</feature>
<feature type="transmembrane region" description="Helical" evidence="1">
    <location>
        <begin position="102"/>
        <end position="122"/>
    </location>
</feature>
<feature type="topological domain" description="Periplasmic" evidence="2">
    <location>
        <begin position="123"/>
        <end position="141"/>
    </location>
</feature>
<feature type="transmembrane region" description="Helical" evidence="1">
    <location>
        <begin position="142"/>
        <end position="162"/>
    </location>
</feature>
<feature type="topological domain" description="Cytoplasmic" evidence="2">
    <location>
        <begin position="163"/>
        <end position="179"/>
    </location>
</feature>
<feature type="transmembrane region" description="Helical" evidence="1">
    <location>
        <begin position="180"/>
        <end position="200"/>
    </location>
</feature>
<feature type="topological domain" description="Periplasmic" evidence="2">
    <location>
        <begin position="201"/>
        <end position="202"/>
    </location>
</feature>
<feature type="transmembrane region" description="Helical" evidence="1">
    <location>
        <begin position="203"/>
        <end position="223"/>
    </location>
</feature>
<feature type="topological domain" description="Cytoplasmic" evidence="2">
    <location>
        <begin position="224"/>
        <end position="228"/>
    </location>
</feature>
<feature type="transmembrane region" description="Helical" evidence="1">
    <location>
        <begin position="229"/>
        <end position="249"/>
    </location>
</feature>
<feature type="topological domain" description="Periplasmic" evidence="2">
    <location>
        <begin position="250"/>
        <end position="255"/>
    </location>
</feature>
<feature type="transmembrane region" description="Helical" evidence="1">
    <location>
        <begin position="256"/>
        <end position="276"/>
    </location>
</feature>
<feature type="topological domain" description="Cytoplasmic" evidence="2">
    <location>
        <begin position="277"/>
        <end position="306"/>
    </location>
</feature>
<sequence>MNQLVVAFPFWHWLVEPLQYEFLIRAIWVSAFVGLVCAVLSCYITLKGWSLMGDAISHAVVPGVVLAYALNIPFAIGAFTFGFGATVAIGYVKSKTRLKEDAVIGIVFTGFFALGLVLVTKIPSNVDLFHILFGNVLGISQQDIIQTLIAGSITLIVILLRRKDLLLFCFDPNHAKAIGLRTQVMYYTLLSVLALTIVAALQTAGIILVISMLVTPGSIGYLLSDRFDHMLWYSVVSSVLSCVLGTYLSYHFDVSTGGMIVVILTTLFVIAMIGAPKYGILAQEWRKRSGPNPEDDENQTVVVDQV</sequence>
<accession>Q55282</accession>